<proteinExistence type="evidence at protein level"/>
<dbReference type="EC" id="3.3.2.14" evidence="2"/>
<dbReference type="EMBL" id="KM213001">
    <property type="protein sequence ID" value="AIQ77708.1"/>
    <property type="molecule type" value="Genomic_DNA"/>
</dbReference>
<dbReference type="SMR" id="A0A096ZEC9"/>
<dbReference type="KEGG" id="ag:AIQ77708"/>
<dbReference type="BioCyc" id="MetaCyc:MONOMER-19134"/>
<dbReference type="BRENDA" id="3.3.2.14">
    <property type="organism ID" value="4363"/>
</dbReference>
<dbReference type="GO" id="GO:0016803">
    <property type="term" value="F:ether hydrolase activity"/>
    <property type="evidence" value="ECO:0000314"/>
    <property type="project" value="UniProtKB"/>
</dbReference>
<dbReference type="GO" id="GO:0008270">
    <property type="term" value="F:zinc ion binding"/>
    <property type="evidence" value="ECO:0000250"/>
    <property type="project" value="UniProtKB"/>
</dbReference>
<dbReference type="Gene3D" id="3.60.15.10">
    <property type="entry name" value="Ribonuclease Z/Hydroxyacylglutathione hydrolase-like"/>
    <property type="match status" value="1"/>
</dbReference>
<dbReference type="InterPro" id="IPR001279">
    <property type="entry name" value="Metallo-B-lactamas"/>
</dbReference>
<dbReference type="InterPro" id="IPR050855">
    <property type="entry name" value="NDM-1-like"/>
</dbReference>
<dbReference type="InterPro" id="IPR036866">
    <property type="entry name" value="RibonucZ/Hydroxyglut_hydro"/>
</dbReference>
<dbReference type="PANTHER" id="PTHR42951:SF4">
    <property type="entry name" value="ACYL-COENZYME A THIOESTERASE MBLAC2"/>
    <property type="match status" value="1"/>
</dbReference>
<dbReference type="PANTHER" id="PTHR42951">
    <property type="entry name" value="METALLO-BETA-LACTAMASE DOMAIN-CONTAINING"/>
    <property type="match status" value="1"/>
</dbReference>
<dbReference type="Pfam" id="PF00753">
    <property type="entry name" value="Lactamase_B"/>
    <property type="match status" value="1"/>
</dbReference>
<dbReference type="SMART" id="SM00849">
    <property type="entry name" value="Lactamase_B"/>
    <property type="match status" value="1"/>
</dbReference>
<dbReference type="SUPFAM" id="SSF56281">
    <property type="entry name" value="Metallo-hydrolase/oxidoreductase"/>
    <property type="match status" value="1"/>
</dbReference>
<sequence>MSVTSQTSSSGSAAVSDCHRGIIDISGPVPGYEWEPSMTTEPVRGRVWTITDGVFRTLAIEGDTGVIAVDTFWSPGSARQYRRALQSHFPRKPVHTIIYTHDHLDHTGFGADFAPDADQILAHELTAEVIARRSSDGQLPATRTWSGERLEVSIDGAEFELIYPGPTHGTGNTALYFPNERFLYMADTVFTGPTYNIVPDFLWTSWIPNTRRLLGLDWDLYVPGHFWRLSRREFEADFELWDATAACALDALRAGVDIDNFADVKKFTYERMDEPFGSRTFRFDEFAAINVLTHMVHYQTGGWGLRDYEPYSNEPFKTTLPQRLGSPL</sequence>
<evidence type="ECO:0000250" key="1">
    <source>
        <dbReference type="UniProtKB" id="P25910"/>
    </source>
</evidence>
<evidence type="ECO:0000269" key="2">
    <source>
    </source>
</evidence>
<evidence type="ECO:0000303" key="3">
    <source>
    </source>
</evidence>
<evidence type="ECO:0000305" key="4"/>
<evidence type="ECO:0000305" key="5">
    <source>
    </source>
</evidence>
<keyword id="KW-0903">Direct protein sequencing</keyword>
<keyword id="KW-0378">Hydrolase</keyword>
<keyword id="KW-0479">Metal-binding</keyword>
<keyword id="KW-0862">Zinc</keyword>
<protein>
    <recommendedName>
        <fullName evidence="3">2,4-dinitroanisole O-demethylase subunit alpha</fullName>
        <shortName evidence="3">DNAN hydrolase subunit alpha</shortName>
        <shortName evidence="3">DNHA</shortName>
        <ecNumber evidence="2">3.3.2.14</ecNumber>
    </recommendedName>
</protein>
<reference key="1">
    <citation type="journal article" date="2014" name="Appl. Environ. Microbiol.">
        <title>Aerobic biodegradation of 2,4-dinitroanisole by Nocardioides sp. strain JS1661.</title>
        <authorList>
            <person name="Fida T.T."/>
            <person name="Palamuru S."/>
            <person name="Pandey G."/>
            <person name="Spain J.C."/>
        </authorList>
    </citation>
    <scope>NUCLEOTIDE SEQUENCE [GENOMIC DNA]</scope>
    <scope>PROTEIN SEQUENCE OF 10-15</scope>
    <scope>FUNCTION</scope>
    <scope>CATALYTIC ACTIVITY</scope>
    <scope>INDUCTION</scope>
    <scope>SUBUNIT</scope>
    <source>
        <strain>JS1661</strain>
    </source>
</reference>
<comment type="function">
    <text evidence="2">Involved in the degradation of 2,4-dinitroanisole (DNAN), an insensitive munition ingredient used in explosive formulations as a replacement for 2,4,6-trinitrotoluene (TNT). Catalyzes the removal of the methyl group from 2,4-dinitroanisole (DNAN) to yield 2,4-dinitrophenol (2,4-DNP) and methanol.</text>
</comment>
<comment type="catalytic activity">
    <reaction evidence="2">
        <text>2,4-dinitroanisole + H2O = 2,4-dinitrophenol + methanol + H(+)</text>
        <dbReference type="Rhea" id="RHEA:44636"/>
        <dbReference type="ChEBI" id="CHEBI:15377"/>
        <dbReference type="ChEBI" id="CHEBI:15378"/>
        <dbReference type="ChEBI" id="CHEBI:17790"/>
        <dbReference type="ChEBI" id="CHEBI:84559"/>
        <dbReference type="ChEBI" id="CHEBI:84561"/>
        <dbReference type="EC" id="3.3.2.14"/>
    </reaction>
</comment>
<comment type="cofactor">
    <cofactor evidence="1">
        <name>Zn(2+)</name>
        <dbReference type="ChEBI" id="CHEBI:29105"/>
    </cofactor>
    <text evidence="1">Binds 2 Zn(2+) ions per subunit.</text>
</comment>
<comment type="subunit">
    <text evidence="5">Part of the complex DnhAB composed of the 2,4-dinitroanisole O-demethylase alpha (DnhA) and beta (DnhB) subunits.</text>
</comment>
<comment type="induction">
    <text evidence="2">Constitutively expressed.</text>
</comment>
<comment type="miscellaneous">
    <text evidence="2">Unlike other known O-demethylases, it does not require oxygen or electron donors.</text>
</comment>
<comment type="similarity">
    <text evidence="4">Belongs to the metallo-beta-lactamase superfamily.</text>
</comment>
<feature type="propeptide" id="PRO_0000435987" evidence="2">
    <location>
        <begin position="1"/>
        <end position="9"/>
    </location>
</feature>
<feature type="chain" id="PRO_0000435988" description="2,4-dinitroanisole O-demethylase subunit alpha">
    <location>
        <begin position="10"/>
        <end position="328"/>
    </location>
</feature>
<feature type="binding site" evidence="1">
    <location>
        <position position="101"/>
    </location>
    <ligand>
        <name>Zn(2+)</name>
        <dbReference type="ChEBI" id="CHEBI:29105"/>
        <label>1</label>
    </ligand>
</feature>
<feature type="binding site" evidence="1">
    <location>
        <position position="103"/>
    </location>
    <ligand>
        <name>Zn(2+)</name>
        <dbReference type="ChEBI" id="CHEBI:29105"/>
        <label>1</label>
    </ligand>
</feature>
<feature type="binding site" evidence="1">
    <location>
        <position position="105"/>
    </location>
    <ligand>
        <name>Zn(2+)</name>
        <dbReference type="ChEBI" id="CHEBI:29105"/>
        <label>2</label>
    </ligand>
</feature>
<feature type="binding site" evidence="1">
    <location>
        <position position="168"/>
    </location>
    <ligand>
        <name>Zn(2+)</name>
        <dbReference type="ChEBI" id="CHEBI:29105"/>
        <label>1</label>
    </ligand>
</feature>
<feature type="binding site" evidence="1">
    <location>
        <position position="225"/>
    </location>
    <ligand>
        <name>Zn(2+)</name>
        <dbReference type="ChEBI" id="CHEBI:29105"/>
        <label>2</label>
    </ligand>
</feature>
<feature type="binding site" evidence="1">
    <location>
        <position position="247"/>
    </location>
    <ligand>
        <name>Zn(2+)</name>
        <dbReference type="ChEBI" id="CHEBI:29105"/>
        <label>2</label>
    </ligand>
</feature>
<accession>A0A096ZEC9</accession>
<gene>
    <name evidence="3" type="primary">dnhA</name>
</gene>
<name>DNHA_NOCS1</name>
<organism>
    <name type="scientific">Nocardioides sp. (strain JS1661)</name>
    <dbReference type="NCBI Taxonomy" id="1517491"/>
    <lineage>
        <taxon>Bacteria</taxon>
        <taxon>Bacillati</taxon>
        <taxon>Actinomycetota</taxon>
        <taxon>Actinomycetes</taxon>
        <taxon>Propionibacteriales</taxon>
        <taxon>Nocardioidaceae</taxon>
        <taxon>Nocardioides</taxon>
    </lineage>
</organism>